<evidence type="ECO:0000250" key="1">
    <source>
        <dbReference type="UniProtKB" id="Q92537"/>
    </source>
</evidence>
<evidence type="ECO:0000255" key="2"/>
<evidence type="ECO:0000255" key="3">
    <source>
        <dbReference type="PROSITE-ProRule" id="PRU00302"/>
    </source>
</evidence>
<evidence type="ECO:0000256" key="4">
    <source>
        <dbReference type="SAM" id="MobiDB-lite"/>
    </source>
</evidence>
<evidence type="ECO:0000269" key="5">
    <source>
    </source>
</evidence>
<evidence type="ECO:0000312" key="6">
    <source>
        <dbReference type="EMBL" id="AAH40401.1"/>
    </source>
</evidence>
<evidence type="ECO:0000312" key="7">
    <source>
        <dbReference type="EMBL" id="BAC35691.1"/>
    </source>
</evidence>
<evidence type="ECO:0000312" key="8">
    <source>
        <dbReference type="EMBL" id="BAE36207.1"/>
    </source>
</evidence>
<evidence type="ECO:0000312" key="9">
    <source>
        <dbReference type="MGI" id="MGI:2444661"/>
    </source>
</evidence>
<evidence type="ECO:0000312" key="10">
    <source>
        <dbReference type="Proteomes" id="UP000000589"/>
    </source>
</evidence>
<reference key="1">
    <citation type="journal article" date="2005" name="Science">
        <title>The transcriptional landscape of the mammalian genome.</title>
        <authorList>
            <person name="Carninci P."/>
            <person name="Kasukawa T."/>
            <person name="Katayama S."/>
            <person name="Gough J."/>
            <person name="Frith M.C."/>
            <person name="Maeda N."/>
            <person name="Oyama R."/>
            <person name="Ravasi T."/>
            <person name="Lenhard B."/>
            <person name="Wells C."/>
            <person name="Kodzius R."/>
            <person name="Shimokawa K."/>
            <person name="Bajic V.B."/>
            <person name="Brenner S.E."/>
            <person name="Batalov S."/>
            <person name="Forrest A.R."/>
            <person name="Zavolan M."/>
            <person name="Davis M.J."/>
            <person name="Wilming L.G."/>
            <person name="Aidinis V."/>
            <person name="Allen J.E."/>
            <person name="Ambesi-Impiombato A."/>
            <person name="Apweiler R."/>
            <person name="Aturaliya R.N."/>
            <person name="Bailey T.L."/>
            <person name="Bansal M."/>
            <person name="Baxter L."/>
            <person name="Beisel K.W."/>
            <person name="Bersano T."/>
            <person name="Bono H."/>
            <person name="Chalk A.M."/>
            <person name="Chiu K.P."/>
            <person name="Choudhary V."/>
            <person name="Christoffels A."/>
            <person name="Clutterbuck D.R."/>
            <person name="Crowe M.L."/>
            <person name="Dalla E."/>
            <person name="Dalrymple B.P."/>
            <person name="de Bono B."/>
            <person name="Della Gatta G."/>
            <person name="di Bernardo D."/>
            <person name="Down T."/>
            <person name="Engstrom P."/>
            <person name="Fagiolini M."/>
            <person name="Faulkner G."/>
            <person name="Fletcher C.F."/>
            <person name="Fukushima T."/>
            <person name="Furuno M."/>
            <person name="Futaki S."/>
            <person name="Gariboldi M."/>
            <person name="Georgii-Hemming P."/>
            <person name="Gingeras T.R."/>
            <person name="Gojobori T."/>
            <person name="Green R.E."/>
            <person name="Gustincich S."/>
            <person name="Harbers M."/>
            <person name="Hayashi Y."/>
            <person name="Hensch T.K."/>
            <person name="Hirokawa N."/>
            <person name="Hill D."/>
            <person name="Huminiecki L."/>
            <person name="Iacono M."/>
            <person name="Ikeo K."/>
            <person name="Iwama A."/>
            <person name="Ishikawa T."/>
            <person name="Jakt M."/>
            <person name="Kanapin A."/>
            <person name="Katoh M."/>
            <person name="Kawasawa Y."/>
            <person name="Kelso J."/>
            <person name="Kitamura H."/>
            <person name="Kitano H."/>
            <person name="Kollias G."/>
            <person name="Krishnan S.P."/>
            <person name="Kruger A."/>
            <person name="Kummerfeld S.K."/>
            <person name="Kurochkin I.V."/>
            <person name="Lareau L.F."/>
            <person name="Lazarevic D."/>
            <person name="Lipovich L."/>
            <person name="Liu J."/>
            <person name="Liuni S."/>
            <person name="McWilliam S."/>
            <person name="Madan Babu M."/>
            <person name="Madera M."/>
            <person name="Marchionni L."/>
            <person name="Matsuda H."/>
            <person name="Matsuzawa S."/>
            <person name="Miki H."/>
            <person name="Mignone F."/>
            <person name="Miyake S."/>
            <person name="Morris K."/>
            <person name="Mottagui-Tabar S."/>
            <person name="Mulder N."/>
            <person name="Nakano N."/>
            <person name="Nakauchi H."/>
            <person name="Ng P."/>
            <person name="Nilsson R."/>
            <person name="Nishiguchi S."/>
            <person name="Nishikawa S."/>
            <person name="Nori F."/>
            <person name="Ohara O."/>
            <person name="Okazaki Y."/>
            <person name="Orlando V."/>
            <person name="Pang K.C."/>
            <person name="Pavan W.J."/>
            <person name="Pavesi G."/>
            <person name="Pesole G."/>
            <person name="Petrovsky N."/>
            <person name="Piazza S."/>
            <person name="Reed J."/>
            <person name="Reid J.F."/>
            <person name="Ring B.Z."/>
            <person name="Ringwald M."/>
            <person name="Rost B."/>
            <person name="Ruan Y."/>
            <person name="Salzberg S.L."/>
            <person name="Sandelin A."/>
            <person name="Schneider C."/>
            <person name="Schoenbach C."/>
            <person name="Sekiguchi K."/>
            <person name="Semple C.A."/>
            <person name="Seno S."/>
            <person name="Sessa L."/>
            <person name="Sheng Y."/>
            <person name="Shibata Y."/>
            <person name="Shimada H."/>
            <person name="Shimada K."/>
            <person name="Silva D."/>
            <person name="Sinclair B."/>
            <person name="Sperling S."/>
            <person name="Stupka E."/>
            <person name="Sugiura K."/>
            <person name="Sultana R."/>
            <person name="Takenaka Y."/>
            <person name="Taki K."/>
            <person name="Tammoja K."/>
            <person name="Tan S.L."/>
            <person name="Tang S."/>
            <person name="Taylor M.S."/>
            <person name="Tegner J."/>
            <person name="Teichmann S.A."/>
            <person name="Ueda H.R."/>
            <person name="van Nimwegen E."/>
            <person name="Verardo R."/>
            <person name="Wei C.L."/>
            <person name="Yagi K."/>
            <person name="Yamanishi H."/>
            <person name="Zabarovsky E."/>
            <person name="Zhu S."/>
            <person name="Zimmer A."/>
            <person name="Hide W."/>
            <person name="Bult C."/>
            <person name="Grimmond S.M."/>
            <person name="Teasdale R.D."/>
            <person name="Liu E.T."/>
            <person name="Brusic V."/>
            <person name="Quackenbush J."/>
            <person name="Wahlestedt C."/>
            <person name="Mattick J.S."/>
            <person name="Hume D.A."/>
            <person name="Kai C."/>
            <person name="Sasaki D."/>
            <person name="Tomaru Y."/>
            <person name="Fukuda S."/>
            <person name="Kanamori-Katayama M."/>
            <person name="Suzuki M."/>
            <person name="Aoki J."/>
            <person name="Arakawa T."/>
            <person name="Iida J."/>
            <person name="Imamura K."/>
            <person name="Itoh M."/>
            <person name="Kato T."/>
            <person name="Kawaji H."/>
            <person name="Kawagashira N."/>
            <person name="Kawashima T."/>
            <person name="Kojima M."/>
            <person name="Kondo S."/>
            <person name="Konno H."/>
            <person name="Nakano K."/>
            <person name="Ninomiya N."/>
            <person name="Nishio T."/>
            <person name="Okada M."/>
            <person name="Plessy C."/>
            <person name="Shibata K."/>
            <person name="Shiraki T."/>
            <person name="Suzuki S."/>
            <person name="Tagami M."/>
            <person name="Waki K."/>
            <person name="Watahiki A."/>
            <person name="Okamura-Oho Y."/>
            <person name="Suzuki H."/>
            <person name="Kawai J."/>
            <person name="Hayashizaki Y."/>
        </authorList>
    </citation>
    <scope>NUCLEOTIDE SEQUENCE [LARGE SCALE MRNA]</scope>
    <source>
        <strain evidence="7">C57BL/6J</strain>
        <tissue evidence="7">Oviduct</tissue>
        <tissue evidence="8">Skin</tissue>
    </source>
</reference>
<reference key="2">
    <citation type="journal article" date="2009" name="PLoS Biol.">
        <title>Lineage-specific biology revealed by a finished genome assembly of the mouse.</title>
        <authorList>
            <person name="Church D.M."/>
            <person name="Goodstadt L."/>
            <person name="Hillier L.W."/>
            <person name="Zody M.C."/>
            <person name="Goldstein S."/>
            <person name="She X."/>
            <person name="Bult C.J."/>
            <person name="Agarwala R."/>
            <person name="Cherry J.L."/>
            <person name="DiCuccio M."/>
            <person name="Hlavina W."/>
            <person name="Kapustin Y."/>
            <person name="Meric P."/>
            <person name="Maglott D."/>
            <person name="Birtle Z."/>
            <person name="Marques A.C."/>
            <person name="Graves T."/>
            <person name="Zhou S."/>
            <person name="Teague B."/>
            <person name="Potamousis K."/>
            <person name="Churas C."/>
            <person name="Place M."/>
            <person name="Herschleb J."/>
            <person name="Runnheim R."/>
            <person name="Forrest D."/>
            <person name="Amos-Landgraf J."/>
            <person name="Schwartz D.C."/>
            <person name="Cheng Z."/>
            <person name="Lindblad-Toh K."/>
            <person name="Eichler E.E."/>
            <person name="Ponting C.P."/>
        </authorList>
    </citation>
    <scope>NUCLEOTIDE SEQUENCE [LARGE SCALE GENOMIC DNA]</scope>
    <source>
        <strain evidence="10">C57BL/6J</strain>
    </source>
</reference>
<reference key="3">
    <citation type="submission" date="2005-07" db="EMBL/GenBank/DDBJ databases">
        <authorList>
            <person name="Mural R.J."/>
            <person name="Adams M.D."/>
            <person name="Myers E.W."/>
            <person name="Smith H.O."/>
            <person name="Venter J.C."/>
        </authorList>
    </citation>
    <scope>NUCLEOTIDE SEQUENCE [LARGE SCALE GENOMIC DNA]</scope>
</reference>
<reference key="4">
    <citation type="journal article" date="2004" name="Genome Res.">
        <title>The status, quality, and expansion of the NIH full-length cDNA project: the Mammalian Gene Collection (MGC).</title>
        <authorList>
            <consortium name="The MGC Project Team"/>
        </authorList>
    </citation>
    <scope>NUCLEOTIDE SEQUENCE [LARGE SCALE MRNA]</scope>
    <source>
        <strain evidence="6">FVB/N</strain>
        <tissue evidence="6">Salivary gland</tissue>
    </source>
</reference>
<reference key="5">
    <citation type="journal article" date="2014" name="J. Natl. Cancer Inst.">
        <title>DRAGO (KIAA0247), a new DNA damage-responsive, p53-inducible gene that cooperates with p53 as oncosuppressor. [Corrected].</title>
        <authorList>
            <person name="Polato F."/>
            <person name="Rusconi P."/>
            <person name="Zangrossi S."/>
            <person name="Morelli F."/>
            <person name="Boeri M."/>
            <person name="Musi A."/>
            <person name="Marchini S."/>
            <person name="Castiglioni V."/>
            <person name="Scanziani E."/>
            <person name="Torri V."/>
            <person name="Broggini M."/>
        </authorList>
    </citation>
    <scope>FUNCTION</scope>
    <scope>DISRUPTION PHENOTYPE</scope>
</reference>
<name>SUSD6_MOUSE</name>
<protein>
    <recommendedName>
        <fullName evidence="1 9">Sushi domain-containing protein 6</fullName>
    </recommendedName>
    <alternativeName>
        <fullName>Drago</fullName>
    </alternativeName>
</protein>
<keyword id="KW-1015">Disulfide bond</keyword>
<keyword id="KW-0472">Membrane</keyword>
<keyword id="KW-1185">Reference proteome</keyword>
<keyword id="KW-0732">Signal</keyword>
<keyword id="KW-0768">Sushi</keyword>
<keyword id="KW-0812">Transmembrane</keyword>
<keyword id="KW-1133">Transmembrane helix</keyword>
<keyword id="KW-0043">Tumor suppressor</keyword>
<dbReference type="EMBL" id="AK054203">
    <property type="protein sequence ID" value="BAC35691.1"/>
    <property type="molecule type" value="mRNA"/>
</dbReference>
<dbReference type="EMBL" id="AK161132">
    <property type="protein sequence ID" value="BAE36207.1"/>
    <property type="molecule type" value="mRNA"/>
</dbReference>
<dbReference type="EMBL" id="AC127337">
    <property type="status" value="NOT_ANNOTATED_CDS"/>
    <property type="molecule type" value="Genomic_DNA"/>
</dbReference>
<dbReference type="EMBL" id="CH466590">
    <property type="protein sequence ID" value="EDL02681.1"/>
    <property type="molecule type" value="Genomic_DNA"/>
</dbReference>
<dbReference type="EMBL" id="BC040401">
    <property type="protein sequence ID" value="AAH40401.1"/>
    <property type="molecule type" value="mRNA"/>
</dbReference>
<dbReference type="CCDS" id="CCDS26016.1"/>
<dbReference type="RefSeq" id="NP_001229348.1">
    <property type="nucleotide sequence ID" value="NM_001242419.1"/>
</dbReference>
<dbReference type="RefSeq" id="NP_848797.1">
    <property type="nucleotide sequence ID" value="NM_178682.4"/>
</dbReference>
<dbReference type="SMR" id="Q8BGE4"/>
<dbReference type="FunCoup" id="Q8BGE4">
    <property type="interactions" value="123"/>
</dbReference>
<dbReference type="STRING" id="10090.ENSMUSP00000064961"/>
<dbReference type="iPTMnet" id="Q8BGE4"/>
<dbReference type="PhosphoSitePlus" id="Q8BGE4"/>
<dbReference type="PaxDb" id="10090-ENSMUSP00000064961"/>
<dbReference type="ProteomicsDB" id="254610"/>
<dbReference type="Pumba" id="Q8BGE4"/>
<dbReference type="Antibodypedia" id="25061">
    <property type="antibodies" value="69 antibodies from 18 providers"/>
</dbReference>
<dbReference type="DNASU" id="217684"/>
<dbReference type="Ensembl" id="ENSMUST00000068519.7">
    <property type="protein sequence ID" value="ENSMUSP00000064961.6"/>
    <property type="gene ID" value="ENSMUSG00000021133.10"/>
</dbReference>
<dbReference type="GeneID" id="217684"/>
<dbReference type="KEGG" id="mmu:217684"/>
<dbReference type="UCSC" id="uc007obi.2">
    <property type="organism name" value="mouse"/>
</dbReference>
<dbReference type="AGR" id="MGI:2444661"/>
<dbReference type="CTD" id="9766"/>
<dbReference type="MGI" id="MGI:2444661">
    <property type="gene designation" value="Susd6"/>
</dbReference>
<dbReference type="VEuPathDB" id="HostDB:ENSMUSG00000021133"/>
<dbReference type="eggNOG" id="ENOG502QYTF">
    <property type="taxonomic scope" value="Eukaryota"/>
</dbReference>
<dbReference type="GeneTree" id="ENSGT00940000157120"/>
<dbReference type="HOGENOM" id="CLU_044351_0_1_1"/>
<dbReference type="InParanoid" id="Q8BGE4"/>
<dbReference type="OMA" id="GHASGCQ"/>
<dbReference type="OrthoDB" id="9050236at2759"/>
<dbReference type="PhylomeDB" id="Q8BGE4"/>
<dbReference type="TreeFam" id="TF332459"/>
<dbReference type="BioGRID-ORCS" id="217684">
    <property type="hits" value="11 hits in 78 CRISPR screens"/>
</dbReference>
<dbReference type="ChiTaRS" id="Susd6">
    <property type="organism name" value="mouse"/>
</dbReference>
<dbReference type="PRO" id="PR:Q8BGE4"/>
<dbReference type="Proteomes" id="UP000000589">
    <property type="component" value="Chromosome 12"/>
</dbReference>
<dbReference type="RNAct" id="Q8BGE4">
    <property type="molecule type" value="protein"/>
</dbReference>
<dbReference type="Bgee" id="ENSMUSG00000021133">
    <property type="expression patterns" value="Expressed in stroma of bone marrow and 248 other cell types or tissues"/>
</dbReference>
<dbReference type="ExpressionAtlas" id="Q8BGE4">
    <property type="expression patterns" value="baseline and differential"/>
</dbReference>
<dbReference type="GO" id="GO:0016020">
    <property type="term" value="C:membrane"/>
    <property type="evidence" value="ECO:0007669"/>
    <property type="project" value="UniProtKB-SubCell"/>
</dbReference>
<dbReference type="GO" id="GO:0006974">
    <property type="term" value="P:DNA damage response"/>
    <property type="evidence" value="ECO:0000250"/>
    <property type="project" value="UniProtKB"/>
</dbReference>
<dbReference type="CDD" id="cd00033">
    <property type="entry name" value="CCP"/>
    <property type="match status" value="1"/>
</dbReference>
<dbReference type="Gene3D" id="2.10.70.10">
    <property type="entry name" value="Complement Module, domain 1"/>
    <property type="match status" value="1"/>
</dbReference>
<dbReference type="InterPro" id="IPR042866">
    <property type="entry name" value="SUSD6"/>
</dbReference>
<dbReference type="InterPro" id="IPR035976">
    <property type="entry name" value="Sushi/SCR/CCP_sf"/>
</dbReference>
<dbReference type="InterPro" id="IPR000436">
    <property type="entry name" value="Sushi_SCR_CCP_dom"/>
</dbReference>
<dbReference type="PANTHER" id="PTHR46839">
    <property type="entry name" value="SUSHI DOMAIN-CONTAINING PROTEIN 6"/>
    <property type="match status" value="1"/>
</dbReference>
<dbReference type="PANTHER" id="PTHR46839:SF2">
    <property type="entry name" value="SUSHI DOMAIN-CONTAINING PROTEIN 6"/>
    <property type="match status" value="1"/>
</dbReference>
<dbReference type="Pfam" id="PF00084">
    <property type="entry name" value="Sushi"/>
    <property type="match status" value="1"/>
</dbReference>
<dbReference type="SMART" id="SM00032">
    <property type="entry name" value="CCP"/>
    <property type="match status" value="1"/>
</dbReference>
<dbReference type="SUPFAM" id="SSF57535">
    <property type="entry name" value="Complement control module/SCR domain"/>
    <property type="match status" value="1"/>
</dbReference>
<dbReference type="PROSITE" id="PS50923">
    <property type="entry name" value="SUSHI"/>
    <property type="match status" value="1"/>
</dbReference>
<accession>Q8BGE4</accession>
<comment type="function">
    <text evidence="1 5">May play a role in growth-suppressive activity and cell death. May be involved in the production of chemokine molecules in umbilical vein endothelial cells (HUVECs) cultured in THP1 monocyte LPS-induced medium (By similarity). Plays a role in preventing tumor onset (PubMed:24652652).</text>
</comment>
<comment type="subcellular location">
    <subcellularLocation>
        <location evidence="2">Membrane</location>
        <topology evidence="2">Single-pass membrane protein</topology>
    </subcellularLocation>
</comment>
<comment type="disruption phenotype">
    <text evidence="5">Mice are viable and fertile and do not show any notable developmental defect or spontaneous tumor development within 2 years. SUSD6 and TP53 double knockout mice show an increase in tumor development and a decrease in lifespan compared to TP53 knockout mice carrying wild-type SUSD6 (PubMed:24652652).</text>
</comment>
<organism evidence="6">
    <name type="scientific">Mus musculus</name>
    <name type="common">Mouse</name>
    <dbReference type="NCBI Taxonomy" id="10090"/>
    <lineage>
        <taxon>Eukaryota</taxon>
        <taxon>Metazoa</taxon>
        <taxon>Chordata</taxon>
        <taxon>Craniata</taxon>
        <taxon>Vertebrata</taxon>
        <taxon>Euteleostomi</taxon>
        <taxon>Mammalia</taxon>
        <taxon>Eutheria</taxon>
        <taxon>Euarchontoglires</taxon>
        <taxon>Glires</taxon>
        <taxon>Rodentia</taxon>
        <taxon>Myomorpha</taxon>
        <taxon>Muroidea</taxon>
        <taxon>Muridae</taxon>
        <taxon>Murinae</taxon>
        <taxon>Mus</taxon>
        <taxon>Mus</taxon>
    </lineage>
</organism>
<proteinExistence type="evidence at transcript level"/>
<feature type="signal peptide" evidence="2">
    <location>
        <begin position="1"/>
        <end position="39"/>
    </location>
</feature>
<feature type="chain" id="PRO_0000432223" description="Sushi domain-containing protein 6" evidence="2">
    <location>
        <begin position="40"/>
        <end position="302"/>
    </location>
</feature>
<feature type="transmembrane region" description="Helical" evidence="2">
    <location>
        <begin position="120"/>
        <end position="140"/>
    </location>
</feature>
<feature type="domain" description="Sushi" evidence="3">
    <location>
        <begin position="40"/>
        <end position="104"/>
    </location>
</feature>
<feature type="region of interest" description="Disordered" evidence="4">
    <location>
        <begin position="202"/>
        <end position="241"/>
    </location>
</feature>
<feature type="region of interest" description="Disordered" evidence="4">
    <location>
        <begin position="256"/>
        <end position="302"/>
    </location>
</feature>
<feature type="compositionally biased region" description="Polar residues" evidence="4">
    <location>
        <begin position="212"/>
        <end position="222"/>
    </location>
</feature>
<feature type="compositionally biased region" description="Polar residues" evidence="4">
    <location>
        <begin position="256"/>
        <end position="267"/>
    </location>
</feature>
<feature type="compositionally biased region" description="Polar residues" evidence="4">
    <location>
        <begin position="279"/>
        <end position="290"/>
    </location>
</feature>
<feature type="disulfide bond" evidence="3">
    <location>
        <begin position="42"/>
        <end position="89"/>
    </location>
</feature>
<feature type="disulfide bond" evidence="3">
    <location>
        <begin position="74"/>
        <end position="102"/>
    </location>
</feature>
<sequence>MCHGKIAPKSSSEFVVTSVGHGVFLQLVILCALLGDGLASVCPLPPEPENGGYICHPRPCKDPLTAGSVIEYLCAEGYMLKGDYKYLTCKNGEWTPAMEVSCHLIEDKETHALGVPALSIVASTASSVALILLLVVLFVLLQPKLKSFHHSRREQGVSGDQVSIMVDGVQVALPSYEEAVYGSSGHCMPPADPRVQIVLSEGSAPSGRNMPREQQLQGQEACSSAGGEDEAPGHSGLCEAWGSQGSETVMVHQATTSSWVAGSGSSRPTHKDTADSENSDIQSLLSLTSEEYTDDIPLLKEA</sequence>
<gene>
    <name evidence="1 9" type="primary">Susd6</name>
    <name evidence="9" type="synonym">Kiaa0247</name>
</gene>